<keyword id="KW-0067">ATP-binding</keyword>
<keyword id="KW-0963">Cytoplasm</keyword>
<keyword id="KW-0418">Kinase</keyword>
<keyword id="KW-0547">Nucleotide-binding</keyword>
<keyword id="KW-0808">Transferase</keyword>
<evidence type="ECO:0000255" key="1">
    <source>
        <dbReference type="HAMAP-Rule" id="MF_00238"/>
    </source>
</evidence>
<proteinExistence type="inferred from homology"/>
<reference key="1">
    <citation type="journal article" date="2004" name="Proc. Natl. Acad. Sci. U.S.A.">
        <title>The louse-borne human pathogen Bartonella quintana is a genomic derivative of the zoonotic agent Bartonella henselae.</title>
        <authorList>
            <person name="Alsmark U.C.M."/>
            <person name="Frank A.C."/>
            <person name="Karlberg E.O."/>
            <person name="Legault B.-A."/>
            <person name="Ardell D.H."/>
            <person name="Canbaeck B."/>
            <person name="Eriksson A.-S."/>
            <person name="Naeslund A.K."/>
            <person name="Handley S.A."/>
            <person name="Huvet M."/>
            <person name="La Scola B."/>
            <person name="Holmberg M."/>
            <person name="Andersson S.G.E."/>
        </authorList>
    </citation>
    <scope>NUCLEOTIDE SEQUENCE [LARGE SCALE GENOMIC DNA]</scope>
    <source>
        <strain>Toulouse</strain>
    </source>
</reference>
<feature type="chain" id="PRO_0000131883" description="Cytidylate kinase">
    <location>
        <begin position="1"/>
        <end position="215"/>
    </location>
</feature>
<feature type="binding site" evidence="1">
    <location>
        <begin position="10"/>
        <end position="18"/>
    </location>
    <ligand>
        <name>ATP</name>
        <dbReference type="ChEBI" id="CHEBI:30616"/>
    </ligand>
</feature>
<comment type="catalytic activity">
    <reaction evidence="1">
        <text>CMP + ATP = CDP + ADP</text>
        <dbReference type="Rhea" id="RHEA:11600"/>
        <dbReference type="ChEBI" id="CHEBI:30616"/>
        <dbReference type="ChEBI" id="CHEBI:58069"/>
        <dbReference type="ChEBI" id="CHEBI:60377"/>
        <dbReference type="ChEBI" id="CHEBI:456216"/>
        <dbReference type="EC" id="2.7.4.25"/>
    </reaction>
</comment>
<comment type="catalytic activity">
    <reaction evidence="1">
        <text>dCMP + ATP = dCDP + ADP</text>
        <dbReference type="Rhea" id="RHEA:25094"/>
        <dbReference type="ChEBI" id="CHEBI:30616"/>
        <dbReference type="ChEBI" id="CHEBI:57566"/>
        <dbReference type="ChEBI" id="CHEBI:58593"/>
        <dbReference type="ChEBI" id="CHEBI:456216"/>
        <dbReference type="EC" id="2.7.4.25"/>
    </reaction>
</comment>
<comment type="subcellular location">
    <subcellularLocation>
        <location evidence="1">Cytoplasm</location>
    </subcellularLocation>
</comment>
<comment type="similarity">
    <text evidence="1">Belongs to the cytidylate kinase family. Type 1 subfamily.</text>
</comment>
<sequence>MKPFVIAIDGPAASGKGTLARKIATHYRLRHLDTGLTYRGVAHALLQQKLALNDEKSALAYAKKLDFNTLKPALLSSHELGEAASKIALIPALRDILVAKQRDFARIFPGSVLDGRDIGTVVCPDADIKFYLLANIQTRAKRRYQEILKKGAQADYHEILAHLEQRDSRDITRTQSPLKSAQNAHLLDTSELGIEATFKIACALIDPIIKAHIIE</sequence>
<name>KCY_BARQU</name>
<accession>Q6G0X4</accession>
<protein>
    <recommendedName>
        <fullName evidence="1">Cytidylate kinase</fullName>
        <shortName evidence="1">CK</shortName>
        <ecNumber evidence="1">2.7.4.25</ecNumber>
    </recommendedName>
    <alternativeName>
        <fullName evidence="1">Cytidine monophosphate kinase</fullName>
        <shortName evidence="1">CMP kinase</shortName>
    </alternativeName>
</protein>
<organism>
    <name type="scientific">Bartonella quintana (strain Toulouse)</name>
    <name type="common">Rochalimaea quintana</name>
    <dbReference type="NCBI Taxonomy" id="283165"/>
    <lineage>
        <taxon>Bacteria</taxon>
        <taxon>Pseudomonadati</taxon>
        <taxon>Pseudomonadota</taxon>
        <taxon>Alphaproteobacteria</taxon>
        <taxon>Hyphomicrobiales</taxon>
        <taxon>Bartonellaceae</taxon>
        <taxon>Bartonella</taxon>
    </lineage>
</organism>
<gene>
    <name evidence="1" type="primary">cmk</name>
    <name type="ordered locus">BQ00870</name>
</gene>
<dbReference type="EC" id="2.7.4.25" evidence="1"/>
<dbReference type="EMBL" id="BX897700">
    <property type="protein sequence ID" value="CAF25594.1"/>
    <property type="molecule type" value="Genomic_DNA"/>
</dbReference>
<dbReference type="RefSeq" id="WP_011178921.1">
    <property type="nucleotide sequence ID" value="NC_005955.1"/>
</dbReference>
<dbReference type="SMR" id="Q6G0X4"/>
<dbReference type="KEGG" id="bqu:BQ00870"/>
<dbReference type="eggNOG" id="COG0283">
    <property type="taxonomic scope" value="Bacteria"/>
</dbReference>
<dbReference type="HOGENOM" id="CLU_079959_0_0_5"/>
<dbReference type="OrthoDB" id="9807434at2"/>
<dbReference type="Proteomes" id="UP000000597">
    <property type="component" value="Chromosome"/>
</dbReference>
<dbReference type="GO" id="GO:0005737">
    <property type="term" value="C:cytoplasm"/>
    <property type="evidence" value="ECO:0007669"/>
    <property type="project" value="UniProtKB-SubCell"/>
</dbReference>
<dbReference type="GO" id="GO:0005524">
    <property type="term" value="F:ATP binding"/>
    <property type="evidence" value="ECO:0007669"/>
    <property type="project" value="UniProtKB-UniRule"/>
</dbReference>
<dbReference type="GO" id="GO:0036430">
    <property type="term" value="F:CMP kinase activity"/>
    <property type="evidence" value="ECO:0007669"/>
    <property type="project" value="RHEA"/>
</dbReference>
<dbReference type="GO" id="GO:0036431">
    <property type="term" value="F:dCMP kinase activity"/>
    <property type="evidence" value="ECO:0007669"/>
    <property type="project" value="RHEA"/>
</dbReference>
<dbReference type="GO" id="GO:0006220">
    <property type="term" value="P:pyrimidine nucleotide metabolic process"/>
    <property type="evidence" value="ECO:0007669"/>
    <property type="project" value="UniProtKB-UniRule"/>
</dbReference>
<dbReference type="CDD" id="cd02020">
    <property type="entry name" value="CMPK"/>
    <property type="match status" value="1"/>
</dbReference>
<dbReference type="Gene3D" id="3.40.50.300">
    <property type="entry name" value="P-loop containing nucleotide triphosphate hydrolases"/>
    <property type="match status" value="1"/>
</dbReference>
<dbReference type="HAMAP" id="MF_00238">
    <property type="entry name" value="Cytidyl_kinase_type1"/>
    <property type="match status" value="1"/>
</dbReference>
<dbReference type="InterPro" id="IPR003136">
    <property type="entry name" value="Cytidylate_kin"/>
</dbReference>
<dbReference type="InterPro" id="IPR011994">
    <property type="entry name" value="Cytidylate_kinase_dom"/>
</dbReference>
<dbReference type="InterPro" id="IPR027417">
    <property type="entry name" value="P-loop_NTPase"/>
</dbReference>
<dbReference type="NCBIfam" id="TIGR00017">
    <property type="entry name" value="cmk"/>
    <property type="match status" value="1"/>
</dbReference>
<dbReference type="Pfam" id="PF02224">
    <property type="entry name" value="Cytidylate_kin"/>
    <property type="match status" value="1"/>
</dbReference>
<dbReference type="SUPFAM" id="SSF52540">
    <property type="entry name" value="P-loop containing nucleoside triphosphate hydrolases"/>
    <property type="match status" value="1"/>
</dbReference>